<feature type="chain" id="PRO_0000340341" description="DNA ligase">
    <location>
        <begin position="1"/>
        <end position="653"/>
    </location>
</feature>
<feature type="domain" description="BRCT" evidence="1">
    <location>
        <begin position="571"/>
        <end position="653"/>
    </location>
</feature>
<feature type="active site" description="N6-AMP-lysine intermediate" evidence="1">
    <location>
        <position position="104"/>
    </location>
</feature>
<feature type="binding site" evidence="1">
    <location>
        <begin position="32"/>
        <end position="36"/>
    </location>
    <ligand>
        <name>NAD(+)</name>
        <dbReference type="ChEBI" id="CHEBI:57540"/>
    </ligand>
</feature>
<feature type="binding site" evidence="1">
    <location>
        <begin position="80"/>
        <end position="81"/>
    </location>
    <ligand>
        <name>NAD(+)</name>
        <dbReference type="ChEBI" id="CHEBI:57540"/>
    </ligand>
</feature>
<feature type="binding site" evidence="1">
    <location>
        <position position="125"/>
    </location>
    <ligand>
        <name>NAD(+)</name>
        <dbReference type="ChEBI" id="CHEBI:57540"/>
    </ligand>
</feature>
<feature type="binding site" evidence="1">
    <location>
        <position position="159"/>
    </location>
    <ligand>
        <name>NAD(+)</name>
        <dbReference type="ChEBI" id="CHEBI:57540"/>
    </ligand>
</feature>
<feature type="binding site" evidence="1">
    <location>
        <position position="297"/>
    </location>
    <ligand>
        <name>NAD(+)</name>
        <dbReference type="ChEBI" id="CHEBI:57540"/>
    </ligand>
</feature>
<feature type="binding site" evidence="1">
    <location>
        <position position="386"/>
    </location>
    <ligand>
        <name>Zn(2+)</name>
        <dbReference type="ChEBI" id="CHEBI:29105"/>
    </ligand>
</feature>
<feature type="binding site" evidence="1">
    <location>
        <position position="389"/>
    </location>
    <ligand>
        <name>Zn(2+)</name>
        <dbReference type="ChEBI" id="CHEBI:29105"/>
    </ligand>
</feature>
<feature type="binding site" evidence="1">
    <location>
        <position position="406"/>
    </location>
    <ligand>
        <name>Zn(2+)</name>
        <dbReference type="ChEBI" id="CHEBI:29105"/>
    </ligand>
</feature>
<feature type="binding site" evidence="1">
    <location>
        <position position="411"/>
    </location>
    <ligand>
        <name>Zn(2+)</name>
        <dbReference type="ChEBI" id="CHEBI:29105"/>
    </ligand>
</feature>
<evidence type="ECO:0000255" key="1">
    <source>
        <dbReference type="HAMAP-Rule" id="MF_01588"/>
    </source>
</evidence>
<comment type="function">
    <text evidence="1">DNA ligase that catalyzes the formation of phosphodiester linkages between 5'-phosphoryl and 3'-hydroxyl groups in double-stranded DNA using NAD as a coenzyme and as the energy source for the reaction. It is essential for DNA replication and repair of damaged DNA.</text>
</comment>
<comment type="catalytic activity">
    <reaction evidence="1">
        <text>NAD(+) + (deoxyribonucleotide)n-3'-hydroxyl + 5'-phospho-(deoxyribonucleotide)m = (deoxyribonucleotide)n+m + AMP + beta-nicotinamide D-nucleotide.</text>
        <dbReference type="EC" id="6.5.1.2"/>
    </reaction>
</comment>
<comment type="cofactor">
    <cofactor evidence="1">
        <name>Mg(2+)</name>
        <dbReference type="ChEBI" id="CHEBI:18420"/>
    </cofactor>
    <cofactor evidence="1">
        <name>Mn(2+)</name>
        <dbReference type="ChEBI" id="CHEBI:29035"/>
    </cofactor>
</comment>
<comment type="similarity">
    <text evidence="1">Belongs to the NAD-dependent DNA ligase family. LigA subfamily.</text>
</comment>
<sequence>MQGKKQRITQLTELLDEAARVYEQEDREIMSNFEYDKLYDELKKLEEETGIVLAGSPTRKVGYEILSELPKERHESAMLSLDKTKEVPALIDWLGNKEGILSWKMDGLTIVLTYRNGELVKAVTRGNGEVGEVVTNNAKVFKNLPLTIPYEGELIIRGEAVIRYSDFEMINAQIPDADAKYKNPRNLCSGSVRQLNNAITAKRNVNFFAFALIRMDEMNRFKTMMEQFNWLKELGFDVVEEKLVTAENMAETMEYFESHIITNDFPSDGLVLFFNDIAYGESLGRTSKFPRNGIAFKWRDEIKETTLQEIEWSASRTGLINPVAIFEPVELEGTTVSRASLHNISIMEGLELGLGDKVTVYKANMIIPQIADNLTRSGHLPIPKTCPVCGGDTMIKQDSDVKSLYCMNPECLAKKIKSFTHFVSRDAMNIEGLSEATIEKLIAKGLIKELADIFHVKDFKEEITTMEGFGEKSFRNLVDSVEKARTPILAKFIYSLGIANVGLANAKLICKEFGYDFNKVSNATVDELTQIPQIGYVIAEAFVSYFQKPENKLIIEDLLKEITFEKEEAAGGSEKLKGLTFVITGSVEHFTNRNEVKDVIEQHGGKVTGSVTAKTNYLINNDNTSSSSKNKKARELGIPVITEEEFIQLLNEA</sequence>
<reference key="1">
    <citation type="submission" date="2007-11" db="EMBL/GenBank/DDBJ databases">
        <title>Complete genome sequence of Clostridium phytofermentans ISDg.</title>
        <authorList>
            <person name="Leschine S.B."/>
            <person name="Warnick T.A."/>
            <person name="Blanchard J.L."/>
            <person name="Schnell D.J."/>
            <person name="Petit E.L."/>
            <person name="LaTouf W.G."/>
            <person name="Copeland A."/>
            <person name="Lucas S."/>
            <person name="Lapidus A."/>
            <person name="Barry K."/>
            <person name="Glavina del Rio T."/>
            <person name="Dalin E."/>
            <person name="Tice H."/>
            <person name="Pitluck S."/>
            <person name="Kiss H."/>
            <person name="Brettin T."/>
            <person name="Bruce D."/>
            <person name="Detter J.C."/>
            <person name="Han C."/>
            <person name="Kuske C."/>
            <person name="Schmutz J."/>
            <person name="Larimer F."/>
            <person name="Land M."/>
            <person name="Hauser L."/>
            <person name="Kyrpides N."/>
            <person name="Kim E.A."/>
            <person name="Richardson P."/>
        </authorList>
    </citation>
    <scope>NUCLEOTIDE SEQUENCE [LARGE SCALE GENOMIC DNA]</scope>
    <source>
        <strain>ATCC 700394 / DSM 18823 / ISDg</strain>
    </source>
</reference>
<dbReference type="EC" id="6.5.1.2" evidence="1"/>
<dbReference type="EMBL" id="CP000885">
    <property type="protein sequence ID" value="ABX43284.1"/>
    <property type="molecule type" value="Genomic_DNA"/>
</dbReference>
<dbReference type="RefSeq" id="WP_012200935.1">
    <property type="nucleotide sequence ID" value="NC_010001.1"/>
</dbReference>
<dbReference type="SMR" id="A9KPL0"/>
<dbReference type="STRING" id="357809.Cphy_2927"/>
<dbReference type="KEGG" id="cpy:Cphy_2927"/>
<dbReference type="eggNOG" id="COG0272">
    <property type="taxonomic scope" value="Bacteria"/>
</dbReference>
<dbReference type="HOGENOM" id="CLU_007764_2_0_9"/>
<dbReference type="OrthoDB" id="9759736at2"/>
<dbReference type="Proteomes" id="UP000000370">
    <property type="component" value="Chromosome"/>
</dbReference>
<dbReference type="GO" id="GO:0003677">
    <property type="term" value="F:DNA binding"/>
    <property type="evidence" value="ECO:0007669"/>
    <property type="project" value="InterPro"/>
</dbReference>
<dbReference type="GO" id="GO:0003911">
    <property type="term" value="F:DNA ligase (NAD+) activity"/>
    <property type="evidence" value="ECO:0007669"/>
    <property type="project" value="UniProtKB-UniRule"/>
</dbReference>
<dbReference type="GO" id="GO:0046872">
    <property type="term" value="F:metal ion binding"/>
    <property type="evidence" value="ECO:0007669"/>
    <property type="project" value="UniProtKB-KW"/>
</dbReference>
<dbReference type="GO" id="GO:0006281">
    <property type="term" value="P:DNA repair"/>
    <property type="evidence" value="ECO:0007669"/>
    <property type="project" value="UniProtKB-KW"/>
</dbReference>
<dbReference type="GO" id="GO:0006260">
    <property type="term" value="P:DNA replication"/>
    <property type="evidence" value="ECO:0007669"/>
    <property type="project" value="UniProtKB-KW"/>
</dbReference>
<dbReference type="CDD" id="cd17748">
    <property type="entry name" value="BRCT_DNA_ligase_like"/>
    <property type="match status" value="1"/>
</dbReference>
<dbReference type="FunFam" id="1.10.150.20:FF:000007">
    <property type="entry name" value="DNA ligase"/>
    <property type="match status" value="1"/>
</dbReference>
<dbReference type="Gene3D" id="1.10.150.20">
    <property type="entry name" value="5' to 3' exonuclease, C-terminal subdomain"/>
    <property type="match status" value="2"/>
</dbReference>
<dbReference type="Gene3D" id="3.40.50.10190">
    <property type="entry name" value="BRCT domain"/>
    <property type="match status" value="1"/>
</dbReference>
<dbReference type="Gene3D" id="3.30.470.30">
    <property type="entry name" value="DNA ligase/mRNA capping enzyme"/>
    <property type="match status" value="1"/>
</dbReference>
<dbReference type="Gene3D" id="1.10.287.610">
    <property type="entry name" value="Helix hairpin bin"/>
    <property type="match status" value="1"/>
</dbReference>
<dbReference type="Gene3D" id="2.40.50.140">
    <property type="entry name" value="Nucleic acid-binding proteins"/>
    <property type="match status" value="1"/>
</dbReference>
<dbReference type="HAMAP" id="MF_01588">
    <property type="entry name" value="DNA_ligase_A"/>
    <property type="match status" value="1"/>
</dbReference>
<dbReference type="InterPro" id="IPR001357">
    <property type="entry name" value="BRCT_dom"/>
</dbReference>
<dbReference type="InterPro" id="IPR036420">
    <property type="entry name" value="BRCT_dom_sf"/>
</dbReference>
<dbReference type="InterPro" id="IPR041663">
    <property type="entry name" value="DisA/LigA_HHH"/>
</dbReference>
<dbReference type="InterPro" id="IPR001679">
    <property type="entry name" value="DNA_ligase"/>
</dbReference>
<dbReference type="InterPro" id="IPR013839">
    <property type="entry name" value="DNAligase_adenylation"/>
</dbReference>
<dbReference type="InterPro" id="IPR013840">
    <property type="entry name" value="DNAligase_N"/>
</dbReference>
<dbReference type="InterPro" id="IPR003583">
    <property type="entry name" value="Hlx-hairpin-Hlx_DNA-bd_motif"/>
</dbReference>
<dbReference type="InterPro" id="IPR012340">
    <property type="entry name" value="NA-bd_OB-fold"/>
</dbReference>
<dbReference type="InterPro" id="IPR004150">
    <property type="entry name" value="NAD_DNA_ligase_OB"/>
</dbReference>
<dbReference type="InterPro" id="IPR010994">
    <property type="entry name" value="RuvA_2-like"/>
</dbReference>
<dbReference type="NCBIfam" id="TIGR00575">
    <property type="entry name" value="dnlj"/>
    <property type="match status" value="1"/>
</dbReference>
<dbReference type="NCBIfam" id="NF005932">
    <property type="entry name" value="PRK07956.1"/>
    <property type="match status" value="1"/>
</dbReference>
<dbReference type="Pfam" id="PF00533">
    <property type="entry name" value="BRCT"/>
    <property type="match status" value="1"/>
</dbReference>
<dbReference type="Pfam" id="PF01653">
    <property type="entry name" value="DNA_ligase_aden"/>
    <property type="match status" value="1"/>
</dbReference>
<dbReference type="Pfam" id="PF03120">
    <property type="entry name" value="DNA_ligase_OB"/>
    <property type="match status" value="1"/>
</dbReference>
<dbReference type="Pfam" id="PF12826">
    <property type="entry name" value="HHH_2"/>
    <property type="match status" value="1"/>
</dbReference>
<dbReference type="Pfam" id="PF14520">
    <property type="entry name" value="HHH_5"/>
    <property type="match status" value="1"/>
</dbReference>
<dbReference type="PIRSF" id="PIRSF001604">
    <property type="entry name" value="LigA"/>
    <property type="match status" value="1"/>
</dbReference>
<dbReference type="SMART" id="SM00292">
    <property type="entry name" value="BRCT"/>
    <property type="match status" value="1"/>
</dbReference>
<dbReference type="SMART" id="SM00278">
    <property type="entry name" value="HhH1"/>
    <property type="match status" value="3"/>
</dbReference>
<dbReference type="SMART" id="SM00532">
    <property type="entry name" value="LIGANc"/>
    <property type="match status" value="1"/>
</dbReference>
<dbReference type="SUPFAM" id="SSF52113">
    <property type="entry name" value="BRCT domain"/>
    <property type="match status" value="1"/>
</dbReference>
<dbReference type="SUPFAM" id="SSF56091">
    <property type="entry name" value="DNA ligase/mRNA capping enzyme, catalytic domain"/>
    <property type="match status" value="1"/>
</dbReference>
<dbReference type="SUPFAM" id="SSF50249">
    <property type="entry name" value="Nucleic acid-binding proteins"/>
    <property type="match status" value="1"/>
</dbReference>
<dbReference type="SUPFAM" id="SSF47781">
    <property type="entry name" value="RuvA domain 2-like"/>
    <property type="match status" value="1"/>
</dbReference>
<dbReference type="PROSITE" id="PS50172">
    <property type="entry name" value="BRCT"/>
    <property type="match status" value="1"/>
</dbReference>
<accession>A9KPL0</accession>
<organism>
    <name type="scientific">Lachnoclostridium phytofermentans (strain ATCC 700394 / DSM 18823 / ISDg)</name>
    <name type="common">Clostridium phytofermentans</name>
    <dbReference type="NCBI Taxonomy" id="357809"/>
    <lineage>
        <taxon>Bacteria</taxon>
        <taxon>Bacillati</taxon>
        <taxon>Bacillota</taxon>
        <taxon>Clostridia</taxon>
        <taxon>Lachnospirales</taxon>
        <taxon>Lachnospiraceae</taxon>
    </lineage>
</organism>
<protein>
    <recommendedName>
        <fullName evidence="1">DNA ligase</fullName>
        <ecNumber evidence="1">6.5.1.2</ecNumber>
    </recommendedName>
    <alternativeName>
        <fullName evidence="1">Polydeoxyribonucleotide synthase [NAD(+)]</fullName>
    </alternativeName>
</protein>
<keyword id="KW-0227">DNA damage</keyword>
<keyword id="KW-0234">DNA repair</keyword>
<keyword id="KW-0235">DNA replication</keyword>
<keyword id="KW-0436">Ligase</keyword>
<keyword id="KW-0460">Magnesium</keyword>
<keyword id="KW-0464">Manganese</keyword>
<keyword id="KW-0479">Metal-binding</keyword>
<keyword id="KW-0520">NAD</keyword>
<keyword id="KW-1185">Reference proteome</keyword>
<keyword id="KW-0862">Zinc</keyword>
<proteinExistence type="inferred from homology"/>
<name>DNLJ_LACP7</name>
<gene>
    <name evidence="1" type="primary">ligA</name>
    <name type="ordered locus">Cphy_2927</name>
</gene>